<protein>
    <recommendedName>
        <fullName evidence="1">Bifunctional uridylyltransferase/uridylyl-removing enzyme</fullName>
        <shortName evidence="1">UTase/UR</shortName>
    </recommendedName>
    <alternativeName>
        <fullName evidence="1">Bifunctional [protein-PII] modification enzyme</fullName>
    </alternativeName>
    <alternativeName>
        <fullName evidence="1">Bifunctional nitrogen sensor protein</fullName>
    </alternativeName>
    <domain>
        <recommendedName>
            <fullName evidence="1">[Protein-PII] uridylyltransferase</fullName>
            <shortName evidence="1">PII uridylyltransferase</shortName>
            <shortName evidence="1">UTase</shortName>
            <ecNumber evidence="1">2.7.7.59</ecNumber>
        </recommendedName>
    </domain>
    <domain>
        <recommendedName>
            <fullName evidence="1">[Protein-PII]-UMP uridylyl-removing enzyme</fullName>
            <shortName evidence="1">UR</shortName>
            <ecNumber evidence="1">3.1.4.-</ecNumber>
        </recommendedName>
    </domain>
</protein>
<comment type="function">
    <text evidence="1">Modifies, by uridylylation and deuridylylation, the PII regulatory proteins (GlnB and homologs), in response to the nitrogen status of the cell that GlnD senses through the glutamine level. Under low glutamine levels, catalyzes the conversion of the PII proteins and UTP to PII-UMP and PPi, while under higher glutamine levels, GlnD hydrolyzes PII-UMP to PII and UMP (deuridylylation). Thus, controls uridylylation state and activity of the PII proteins, and plays an important role in the regulation of nitrogen assimilation and metabolism.</text>
</comment>
<comment type="catalytic activity">
    <reaction evidence="1">
        <text>[protein-PII]-L-tyrosine + UTP = [protein-PII]-uridylyl-L-tyrosine + diphosphate</text>
        <dbReference type="Rhea" id="RHEA:13673"/>
        <dbReference type="Rhea" id="RHEA-COMP:12147"/>
        <dbReference type="Rhea" id="RHEA-COMP:12148"/>
        <dbReference type="ChEBI" id="CHEBI:33019"/>
        <dbReference type="ChEBI" id="CHEBI:46398"/>
        <dbReference type="ChEBI" id="CHEBI:46858"/>
        <dbReference type="ChEBI" id="CHEBI:90602"/>
        <dbReference type="EC" id="2.7.7.59"/>
    </reaction>
</comment>
<comment type="catalytic activity">
    <reaction evidence="1">
        <text>[protein-PII]-uridylyl-L-tyrosine + H2O = [protein-PII]-L-tyrosine + UMP + H(+)</text>
        <dbReference type="Rhea" id="RHEA:48600"/>
        <dbReference type="Rhea" id="RHEA-COMP:12147"/>
        <dbReference type="Rhea" id="RHEA-COMP:12148"/>
        <dbReference type="ChEBI" id="CHEBI:15377"/>
        <dbReference type="ChEBI" id="CHEBI:15378"/>
        <dbReference type="ChEBI" id="CHEBI:46858"/>
        <dbReference type="ChEBI" id="CHEBI:57865"/>
        <dbReference type="ChEBI" id="CHEBI:90602"/>
    </reaction>
</comment>
<comment type="cofactor">
    <cofactor evidence="1">
        <name>Mg(2+)</name>
        <dbReference type="ChEBI" id="CHEBI:18420"/>
    </cofactor>
</comment>
<comment type="activity regulation">
    <text evidence="1">Uridylyltransferase (UTase) activity is inhibited by glutamine, while glutamine activates uridylyl-removing (UR) activity.</text>
</comment>
<comment type="domain">
    <text evidence="1">Has four distinct domains: an N-terminal nucleotidyltransferase (NT) domain responsible for UTase activity, a central HD domain that encodes UR activity, and two C-terminal ACT domains that seem to have a role in glutamine sensing.</text>
</comment>
<comment type="similarity">
    <text evidence="1">Belongs to the GlnD family.</text>
</comment>
<reference key="1">
    <citation type="journal article" date="2005" name="Proc. Natl. Acad. Sci. U.S.A.">
        <title>Comparison of the complete genome sequences of Pseudomonas syringae pv. syringae B728a and pv. tomato DC3000.</title>
        <authorList>
            <person name="Feil H."/>
            <person name="Feil W.S."/>
            <person name="Chain P."/>
            <person name="Larimer F."/>
            <person name="Dibartolo G."/>
            <person name="Copeland A."/>
            <person name="Lykidis A."/>
            <person name="Trong S."/>
            <person name="Nolan M."/>
            <person name="Goltsman E."/>
            <person name="Thiel J."/>
            <person name="Malfatti S."/>
            <person name="Loper J.E."/>
            <person name="Lapidus A."/>
            <person name="Detter J.C."/>
            <person name="Land M."/>
            <person name="Richardson P.M."/>
            <person name="Kyrpides N.C."/>
            <person name="Ivanova N."/>
            <person name="Lindow S.E."/>
        </authorList>
    </citation>
    <scope>NUCLEOTIDE SEQUENCE [LARGE SCALE GENOMIC DNA]</scope>
    <source>
        <strain>B728a</strain>
    </source>
</reference>
<organism>
    <name type="scientific">Pseudomonas syringae pv. syringae (strain B728a)</name>
    <dbReference type="NCBI Taxonomy" id="205918"/>
    <lineage>
        <taxon>Bacteria</taxon>
        <taxon>Pseudomonadati</taxon>
        <taxon>Pseudomonadota</taxon>
        <taxon>Gammaproteobacteria</taxon>
        <taxon>Pseudomonadales</taxon>
        <taxon>Pseudomonadaceae</taxon>
        <taxon>Pseudomonas</taxon>
        <taxon>Pseudomonas syringae</taxon>
    </lineage>
</organism>
<sequence length="898" mass="102870">MPQVDPDLFDRGQFQAELALKASPIAAFKKAIRRARDVLDERFRSGRDIRRLIEDRAWFVDNILQKAWDQFEWSEDADIALLAVGGYGRGELHPYSDIDLLILLDSDDHEVFREPIERFLTLLWDIGLEVGQSVRSVNECAQEGRADLTVITNLMESRTIAGPEHLRQRMLEVTSTEHMWPSKEFFLAKHAEQKKRHHKYNDTEYNLEPNVKGSPGGLRDIQTILWVARRQYGTLNLHALAGEGFLLGSENALLASSQEFLWKVRYALHMLAGRSEDRLLFDYQVRIAGLLGYEDNDAKLAIERFMQKYYRVVMSIAELSDLIIQHFEEVILSDDSGTPQPINSRFQLHDGYIEATHQNVFKRTPFAMIEIFVLMAQHPEIKGVRADTIRLLREHRHLINDEFRNDIRNTSLFIELFKCEIGIHRNLRRMNRYGILGLYLPEFGHIVGQMQHDLFHIYTVDAHTLNLIKHLRKLQYTEVSEKFPLASKIMGRLPKPELIYLAGLYHDIGKGRGGDHSELGAIDAQAFGARHHLPAWDTRLIVWLVSNHLVMSTTAQRKDLSDPQVIHDFAQFVGDEVHLDYLYVLTVADINATNPTLWNSWRASLLRQLYTETKRALRRGLENPVDREEQIRRTQTAALDILVRNGTDPDDVEQLWSALGDDYFLRHTAGDVAWHSDAILQQPADGGPLVLIKETTQREFEGGTQIFIYAPDQHDFFAVTVAAMDQLNLNIHDARIITSSSKFTLDTYIVLDHEGGSIGNNPERIQDIREGLTEALRNPDDYPTIIKRRVPRQLKHFAFAPQVTIHNDAQRPVTVLELLAPDRPGLLARIGKIFLEFDLSLQNAKIATLGERVEDVFFITDANNHPLSDPQLCRQLQDAIVKQLSVNSEPGNDLRISI</sequence>
<gene>
    <name evidence="1" type="primary">glnD</name>
    <name type="ordered locus">Psyr_1341</name>
</gene>
<evidence type="ECO:0000255" key="1">
    <source>
        <dbReference type="HAMAP-Rule" id="MF_00277"/>
    </source>
</evidence>
<evidence type="ECO:0000255" key="2">
    <source>
        <dbReference type="PROSITE-ProRule" id="PRU01175"/>
    </source>
</evidence>
<accession>Q4ZWT0</accession>
<feature type="chain" id="PRO_0000192755" description="Bifunctional uridylyltransferase/uridylyl-removing enzyme">
    <location>
        <begin position="1"/>
        <end position="898"/>
    </location>
</feature>
<feature type="domain" description="HD" evidence="2">
    <location>
        <begin position="460"/>
        <end position="582"/>
    </location>
</feature>
<feature type="domain" description="ACT 1" evidence="1">
    <location>
        <begin position="705"/>
        <end position="788"/>
    </location>
</feature>
<feature type="domain" description="ACT 2" evidence="1">
    <location>
        <begin position="815"/>
        <end position="891"/>
    </location>
</feature>
<feature type="region of interest" description="Uridylyltransferase">
    <location>
        <begin position="1"/>
        <end position="341"/>
    </location>
</feature>
<feature type="region of interest" description="Uridylyl-removing">
    <location>
        <begin position="342"/>
        <end position="704"/>
    </location>
</feature>
<dbReference type="EC" id="2.7.7.59" evidence="1"/>
<dbReference type="EC" id="3.1.4.-" evidence="1"/>
<dbReference type="EMBL" id="CP000075">
    <property type="protein sequence ID" value="AAY36392.1"/>
    <property type="molecule type" value="Genomic_DNA"/>
</dbReference>
<dbReference type="RefSeq" id="WP_011266972.1">
    <property type="nucleotide sequence ID" value="NC_007005.1"/>
</dbReference>
<dbReference type="RefSeq" id="YP_234430.1">
    <property type="nucleotide sequence ID" value="NC_007005.1"/>
</dbReference>
<dbReference type="SMR" id="Q4ZWT0"/>
<dbReference type="STRING" id="205918.Psyr_1341"/>
<dbReference type="KEGG" id="psb:Psyr_1341"/>
<dbReference type="PATRIC" id="fig|205918.7.peg.1374"/>
<dbReference type="eggNOG" id="COG2844">
    <property type="taxonomic scope" value="Bacteria"/>
</dbReference>
<dbReference type="HOGENOM" id="CLU_012833_0_0_6"/>
<dbReference type="OrthoDB" id="9758038at2"/>
<dbReference type="Proteomes" id="UP000000426">
    <property type="component" value="Chromosome"/>
</dbReference>
<dbReference type="GO" id="GO:0008773">
    <property type="term" value="F:[protein-PII] uridylyltransferase activity"/>
    <property type="evidence" value="ECO:0007669"/>
    <property type="project" value="UniProtKB-UniRule"/>
</dbReference>
<dbReference type="GO" id="GO:0008081">
    <property type="term" value="F:phosphoric diester hydrolase activity"/>
    <property type="evidence" value="ECO:0007669"/>
    <property type="project" value="UniProtKB-UniRule"/>
</dbReference>
<dbReference type="GO" id="GO:0006808">
    <property type="term" value="P:regulation of nitrogen utilization"/>
    <property type="evidence" value="ECO:0007669"/>
    <property type="project" value="UniProtKB-UniRule"/>
</dbReference>
<dbReference type="CDD" id="cd04899">
    <property type="entry name" value="ACT_ACR-UUR-like_2"/>
    <property type="match status" value="1"/>
</dbReference>
<dbReference type="CDD" id="cd04900">
    <property type="entry name" value="ACT_UUR-like_1"/>
    <property type="match status" value="1"/>
</dbReference>
<dbReference type="CDD" id="cd00077">
    <property type="entry name" value="HDc"/>
    <property type="match status" value="1"/>
</dbReference>
<dbReference type="CDD" id="cd05401">
    <property type="entry name" value="NT_GlnE_GlnD_like"/>
    <property type="match status" value="1"/>
</dbReference>
<dbReference type="FunFam" id="1.10.3090.10:FF:000005">
    <property type="entry name" value="Bifunctional uridylyltransferase/uridylyl-removing enzyme"/>
    <property type="match status" value="1"/>
</dbReference>
<dbReference type="Gene3D" id="3.30.460.10">
    <property type="entry name" value="Beta Polymerase, domain 2"/>
    <property type="match status" value="1"/>
</dbReference>
<dbReference type="Gene3D" id="1.10.3090.10">
    <property type="entry name" value="cca-adding enzyme, domain 2"/>
    <property type="match status" value="1"/>
</dbReference>
<dbReference type="HAMAP" id="MF_00277">
    <property type="entry name" value="PII_uridylyl_transf"/>
    <property type="match status" value="1"/>
</dbReference>
<dbReference type="InterPro" id="IPR045865">
    <property type="entry name" value="ACT-like_dom_sf"/>
</dbReference>
<dbReference type="InterPro" id="IPR002912">
    <property type="entry name" value="ACT_dom"/>
</dbReference>
<dbReference type="InterPro" id="IPR003607">
    <property type="entry name" value="HD/PDEase_dom"/>
</dbReference>
<dbReference type="InterPro" id="IPR006674">
    <property type="entry name" value="HD_domain"/>
</dbReference>
<dbReference type="InterPro" id="IPR043519">
    <property type="entry name" value="NT_sf"/>
</dbReference>
<dbReference type="InterPro" id="IPR013546">
    <property type="entry name" value="PII_UdlTrfase/GS_AdlTrfase"/>
</dbReference>
<dbReference type="InterPro" id="IPR002934">
    <property type="entry name" value="Polymerase_NTP_transf_dom"/>
</dbReference>
<dbReference type="InterPro" id="IPR010043">
    <property type="entry name" value="UTase/UR"/>
</dbReference>
<dbReference type="NCBIfam" id="NF001366">
    <property type="entry name" value="PRK00275.1"/>
    <property type="match status" value="1"/>
</dbReference>
<dbReference type="NCBIfam" id="TIGR01693">
    <property type="entry name" value="UTase_glnD"/>
    <property type="match status" value="1"/>
</dbReference>
<dbReference type="PANTHER" id="PTHR47320">
    <property type="entry name" value="BIFUNCTIONAL URIDYLYLTRANSFERASE/URIDYLYL-REMOVING ENZYME"/>
    <property type="match status" value="1"/>
</dbReference>
<dbReference type="PANTHER" id="PTHR47320:SF1">
    <property type="entry name" value="BIFUNCTIONAL URIDYLYLTRANSFERASE_URIDYLYL-REMOVING ENZYME"/>
    <property type="match status" value="1"/>
</dbReference>
<dbReference type="Pfam" id="PF01842">
    <property type="entry name" value="ACT"/>
    <property type="match status" value="1"/>
</dbReference>
<dbReference type="Pfam" id="PF08335">
    <property type="entry name" value="GlnD_UR_UTase"/>
    <property type="match status" value="1"/>
</dbReference>
<dbReference type="Pfam" id="PF01966">
    <property type="entry name" value="HD"/>
    <property type="match status" value="1"/>
</dbReference>
<dbReference type="Pfam" id="PF01909">
    <property type="entry name" value="NTP_transf_2"/>
    <property type="match status" value="1"/>
</dbReference>
<dbReference type="PIRSF" id="PIRSF006288">
    <property type="entry name" value="PII_uridyltransf"/>
    <property type="match status" value="1"/>
</dbReference>
<dbReference type="SMART" id="SM00471">
    <property type="entry name" value="HDc"/>
    <property type="match status" value="1"/>
</dbReference>
<dbReference type="SUPFAM" id="SSF55021">
    <property type="entry name" value="ACT-like"/>
    <property type="match status" value="1"/>
</dbReference>
<dbReference type="SUPFAM" id="SSF109604">
    <property type="entry name" value="HD-domain/PDEase-like"/>
    <property type="match status" value="1"/>
</dbReference>
<dbReference type="SUPFAM" id="SSF81301">
    <property type="entry name" value="Nucleotidyltransferase"/>
    <property type="match status" value="1"/>
</dbReference>
<dbReference type="SUPFAM" id="SSF81593">
    <property type="entry name" value="Nucleotidyltransferase substrate binding subunit/domain"/>
    <property type="match status" value="1"/>
</dbReference>
<dbReference type="PROSITE" id="PS51671">
    <property type="entry name" value="ACT"/>
    <property type="match status" value="2"/>
</dbReference>
<dbReference type="PROSITE" id="PS51831">
    <property type="entry name" value="HD"/>
    <property type="match status" value="1"/>
</dbReference>
<keyword id="KW-0378">Hydrolase</keyword>
<keyword id="KW-0460">Magnesium</keyword>
<keyword id="KW-0511">Multifunctional enzyme</keyword>
<keyword id="KW-0548">Nucleotidyltransferase</keyword>
<keyword id="KW-0677">Repeat</keyword>
<keyword id="KW-0808">Transferase</keyword>
<proteinExistence type="inferred from homology"/>
<name>GLND_PSEU2</name>